<comment type="function">
    <text evidence="1">Catalyzes the reduction of the glycolytic intermediate dihydroxyacetone phosphate (DHAP) to sn-glycerol 3-phosphate (G3P), the key precursor for phospholipid synthesis.</text>
</comment>
<comment type="catalytic activity">
    <reaction evidence="1">
        <text>sn-glycerol 3-phosphate + NAD(+) = dihydroxyacetone phosphate + NADH + H(+)</text>
        <dbReference type="Rhea" id="RHEA:11092"/>
        <dbReference type="ChEBI" id="CHEBI:15378"/>
        <dbReference type="ChEBI" id="CHEBI:57540"/>
        <dbReference type="ChEBI" id="CHEBI:57597"/>
        <dbReference type="ChEBI" id="CHEBI:57642"/>
        <dbReference type="ChEBI" id="CHEBI:57945"/>
        <dbReference type="EC" id="1.1.1.94"/>
    </reaction>
    <physiologicalReaction direction="right-to-left" evidence="1">
        <dbReference type="Rhea" id="RHEA:11094"/>
    </physiologicalReaction>
</comment>
<comment type="catalytic activity">
    <reaction evidence="1">
        <text>sn-glycerol 3-phosphate + NADP(+) = dihydroxyacetone phosphate + NADPH + H(+)</text>
        <dbReference type="Rhea" id="RHEA:11096"/>
        <dbReference type="ChEBI" id="CHEBI:15378"/>
        <dbReference type="ChEBI" id="CHEBI:57597"/>
        <dbReference type="ChEBI" id="CHEBI:57642"/>
        <dbReference type="ChEBI" id="CHEBI:57783"/>
        <dbReference type="ChEBI" id="CHEBI:58349"/>
        <dbReference type="EC" id="1.1.1.94"/>
    </reaction>
    <physiologicalReaction direction="right-to-left" evidence="1">
        <dbReference type="Rhea" id="RHEA:11098"/>
    </physiologicalReaction>
</comment>
<comment type="pathway">
    <text evidence="1">Membrane lipid metabolism; glycerophospholipid metabolism.</text>
</comment>
<comment type="subcellular location">
    <subcellularLocation>
        <location evidence="1">Cytoplasm</location>
    </subcellularLocation>
</comment>
<comment type="similarity">
    <text evidence="1">Belongs to the NAD-dependent glycerol-3-phosphate dehydrogenase family.</text>
</comment>
<protein>
    <recommendedName>
        <fullName evidence="1">Glycerol-3-phosphate dehydrogenase [NAD(P)+]</fullName>
        <ecNumber evidence="1">1.1.1.94</ecNumber>
    </recommendedName>
    <alternativeName>
        <fullName evidence="1">NAD(P)(+)-dependent glycerol-3-phosphate dehydrogenase</fullName>
    </alternativeName>
    <alternativeName>
        <fullName evidence="1">NAD(P)H-dependent dihydroxyacetone-phosphate reductase</fullName>
    </alternativeName>
</protein>
<accession>Q87KZ2</accession>
<reference key="1">
    <citation type="journal article" date="2003" name="Lancet">
        <title>Genome sequence of Vibrio parahaemolyticus: a pathogenic mechanism distinct from that of V. cholerae.</title>
        <authorList>
            <person name="Makino K."/>
            <person name="Oshima K."/>
            <person name="Kurokawa K."/>
            <person name="Yokoyama K."/>
            <person name="Uda T."/>
            <person name="Tagomori K."/>
            <person name="Iijima Y."/>
            <person name="Najima M."/>
            <person name="Nakano M."/>
            <person name="Yamashita A."/>
            <person name="Kubota Y."/>
            <person name="Kimura S."/>
            <person name="Yasunaga T."/>
            <person name="Honda T."/>
            <person name="Shinagawa H."/>
            <person name="Hattori M."/>
            <person name="Iida T."/>
        </authorList>
    </citation>
    <scope>NUCLEOTIDE SEQUENCE [LARGE SCALE GENOMIC DNA]</scope>
    <source>
        <strain>RIMD 2210633</strain>
    </source>
</reference>
<proteinExistence type="inferred from homology"/>
<dbReference type="EC" id="1.1.1.94" evidence="1"/>
<dbReference type="EMBL" id="BA000031">
    <property type="protein sequence ID" value="BAC61095.1"/>
    <property type="molecule type" value="Genomic_DNA"/>
</dbReference>
<dbReference type="RefSeq" id="NP_799211.1">
    <property type="nucleotide sequence ID" value="NC_004603.1"/>
</dbReference>
<dbReference type="RefSeq" id="WP_005482209.1">
    <property type="nucleotide sequence ID" value="NC_004603.1"/>
</dbReference>
<dbReference type="SMR" id="Q87KZ2"/>
<dbReference type="GeneID" id="1190395"/>
<dbReference type="KEGG" id="vpa:VP2832"/>
<dbReference type="PATRIC" id="fig|223926.6.peg.2724"/>
<dbReference type="eggNOG" id="COG0240">
    <property type="taxonomic scope" value="Bacteria"/>
</dbReference>
<dbReference type="HOGENOM" id="CLU_033449_0_2_6"/>
<dbReference type="UniPathway" id="UPA00940"/>
<dbReference type="Proteomes" id="UP000002493">
    <property type="component" value="Chromosome 1"/>
</dbReference>
<dbReference type="GO" id="GO:0005829">
    <property type="term" value="C:cytosol"/>
    <property type="evidence" value="ECO:0007669"/>
    <property type="project" value="TreeGrafter"/>
</dbReference>
<dbReference type="GO" id="GO:0047952">
    <property type="term" value="F:glycerol-3-phosphate dehydrogenase [NAD(P)+] activity"/>
    <property type="evidence" value="ECO:0007669"/>
    <property type="project" value="UniProtKB-UniRule"/>
</dbReference>
<dbReference type="GO" id="GO:0051287">
    <property type="term" value="F:NAD binding"/>
    <property type="evidence" value="ECO:0007669"/>
    <property type="project" value="InterPro"/>
</dbReference>
<dbReference type="GO" id="GO:0005975">
    <property type="term" value="P:carbohydrate metabolic process"/>
    <property type="evidence" value="ECO:0007669"/>
    <property type="project" value="InterPro"/>
</dbReference>
<dbReference type="GO" id="GO:0046167">
    <property type="term" value="P:glycerol-3-phosphate biosynthetic process"/>
    <property type="evidence" value="ECO:0007669"/>
    <property type="project" value="UniProtKB-UniRule"/>
</dbReference>
<dbReference type="GO" id="GO:0046168">
    <property type="term" value="P:glycerol-3-phosphate catabolic process"/>
    <property type="evidence" value="ECO:0007669"/>
    <property type="project" value="InterPro"/>
</dbReference>
<dbReference type="GO" id="GO:0046474">
    <property type="term" value="P:glycerophospholipid biosynthetic process"/>
    <property type="evidence" value="ECO:0007669"/>
    <property type="project" value="TreeGrafter"/>
</dbReference>
<dbReference type="FunFam" id="1.10.1040.10:FF:000001">
    <property type="entry name" value="Glycerol-3-phosphate dehydrogenase [NAD(P)+]"/>
    <property type="match status" value="1"/>
</dbReference>
<dbReference type="FunFam" id="3.40.50.720:FF:000019">
    <property type="entry name" value="Glycerol-3-phosphate dehydrogenase [NAD(P)+]"/>
    <property type="match status" value="1"/>
</dbReference>
<dbReference type="Gene3D" id="1.10.1040.10">
    <property type="entry name" value="N-(1-d-carboxylethyl)-l-norvaline Dehydrogenase, domain 2"/>
    <property type="match status" value="1"/>
</dbReference>
<dbReference type="Gene3D" id="3.40.50.720">
    <property type="entry name" value="NAD(P)-binding Rossmann-like Domain"/>
    <property type="match status" value="1"/>
</dbReference>
<dbReference type="HAMAP" id="MF_00394">
    <property type="entry name" value="NAD_Glyc3P_dehydrog"/>
    <property type="match status" value="1"/>
</dbReference>
<dbReference type="InterPro" id="IPR008927">
    <property type="entry name" value="6-PGluconate_DH-like_C_sf"/>
</dbReference>
<dbReference type="InterPro" id="IPR013328">
    <property type="entry name" value="6PGD_dom2"/>
</dbReference>
<dbReference type="InterPro" id="IPR006168">
    <property type="entry name" value="G3P_DH_NAD-dep"/>
</dbReference>
<dbReference type="InterPro" id="IPR006109">
    <property type="entry name" value="G3P_DH_NAD-dep_C"/>
</dbReference>
<dbReference type="InterPro" id="IPR011128">
    <property type="entry name" value="G3P_DH_NAD-dep_N"/>
</dbReference>
<dbReference type="InterPro" id="IPR036291">
    <property type="entry name" value="NAD(P)-bd_dom_sf"/>
</dbReference>
<dbReference type="NCBIfam" id="NF000939">
    <property type="entry name" value="PRK00094.1-1"/>
    <property type="match status" value="1"/>
</dbReference>
<dbReference type="NCBIfam" id="NF000940">
    <property type="entry name" value="PRK00094.1-2"/>
    <property type="match status" value="1"/>
</dbReference>
<dbReference type="NCBIfam" id="NF000942">
    <property type="entry name" value="PRK00094.1-4"/>
    <property type="match status" value="1"/>
</dbReference>
<dbReference type="PANTHER" id="PTHR11728">
    <property type="entry name" value="GLYCEROL-3-PHOSPHATE DEHYDROGENASE"/>
    <property type="match status" value="1"/>
</dbReference>
<dbReference type="PANTHER" id="PTHR11728:SF1">
    <property type="entry name" value="GLYCEROL-3-PHOSPHATE DEHYDROGENASE [NAD(+)] 2, CHLOROPLASTIC"/>
    <property type="match status" value="1"/>
</dbReference>
<dbReference type="Pfam" id="PF07479">
    <property type="entry name" value="NAD_Gly3P_dh_C"/>
    <property type="match status" value="1"/>
</dbReference>
<dbReference type="Pfam" id="PF01210">
    <property type="entry name" value="NAD_Gly3P_dh_N"/>
    <property type="match status" value="1"/>
</dbReference>
<dbReference type="PIRSF" id="PIRSF000114">
    <property type="entry name" value="Glycerol-3-P_dh"/>
    <property type="match status" value="1"/>
</dbReference>
<dbReference type="PRINTS" id="PR00077">
    <property type="entry name" value="GPDHDRGNASE"/>
</dbReference>
<dbReference type="SUPFAM" id="SSF48179">
    <property type="entry name" value="6-phosphogluconate dehydrogenase C-terminal domain-like"/>
    <property type="match status" value="1"/>
</dbReference>
<dbReference type="SUPFAM" id="SSF51735">
    <property type="entry name" value="NAD(P)-binding Rossmann-fold domains"/>
    <property type="match status" value="1"/>
</dbReference>
<dbReference type="PROSITE" id="PS00957">
    <property type="entry name" value="NAD_G3PDH"/>
    <property type="match status" value="1"/>
</dbReference>
<gene>
    <name evidence="1" type="primary">gpsA</name>
    <name type="ordered locus">VP2832</name>
</gene>
<organism>
    <name type="scientific">Vibrio parahaemolyticus serotype O3:K6 (strain RIMD 2210633)</name>
    <dbReference type="NCBI Taxonomy" id="223926"/>
    <lineage>
        <taxon>Bacteria</taxon>
        <taxon>Pseudomonadati</taxon>
        <taxon>Pseudomonadota</taxon>
        <taxon>Gammaproteobacteria</taxon>
        <taxon>Vibrionales</taxon>
        <taxon>Vibrionaceae</taxon>
        <taxon>Vibrio</taxon>
    </lineage>
</organism>
<name>GPDA_VIBPA</name>
<sequence length="345" mass="37066">MTQANTNNAYGKDIAMTVIGAGSYGTSLAISLARNGANVVLWGHEPEHMARLEADRANHAFLPGVDFPESLIIESDLEKAVQASRDLLVVVPSHVFGIVLNSCKPFLREDSRICWATKGLEPETGRLLKDVAYDIIGENYSLAVLSGPTFAKELAMGLPTAISVASPDAEFVADLQEKIHCSKTFRVYANNDFIGMQLGGAVKNVIAIGAGMSDGIGFGANARTALITRGLAEMSRLGAALGAKPETFMGMAGLGDLVLTCTDNQSRNRRFGLALGQGQDVDTAQEEIGQVVEGYRNTKEVWMLSQRMGVEMPIVDQIYQVLYQGKDARLAAQDLLARDKKAEGK</sequence>
<feature type="chain" id="PRO_0000138055" description="Glycerol-3-phosphate dehydrogenase [NAD(P)+]">
    <location>
        <begin position="1"/>
        <end position="345"/>
    </location>
</feature>
<feature type="active site" description="Proton acceptor" evidence="1">
    <location>
        <position position="203"/>
    </location>
</feature>
<feature type="binding site" evidence="1">
    <location>
        <position position="23"/>
    </location>
    <ligand>
        <name>NADPH</name>
        <dbReference type="ChEBI" id="CHEBI:57783"/>
    </ligand>
</feature>
<feature type="binding site" evidence="1">
    <location>
        <position position="24"/>
    </location>
    <ligand>
        <name>NADPH</name>
        <dbReference type="ChEBI" id="CHEBI:57783"/>
    </ligand>
</feature>
<feature type="binding site" evidence="1">
    <location>
        <position position="44"/>
    </location>
    <ligand>
        <name>NADPH</name>
        <dbReference type="ChEBI" id="CHEBI:57783"/>
    </ligand>
</feature>
<feature type="binding site" evidence="1">
    <location>
        <position position="118"/>
    </location>
    <ligand>
        <name>NADPH</name>
        <dbReference type="ChEBI" id="CHEBI:57783"/>
    </ligand>
</feature>
<feature type="binding site" evidence="1">
    <location>
        <position position="118"/>
    </location>
    <ligand>
        <name>sn-glycerol 3-phosphate</name>
        <dbReference type="ChEBI" id="CHEBI:57597"/>
    </ligand>
</feature>
<feature type="binding site" evidence="1">
    <location>
        <position position="147"/>
    </location>
    <ligand>
        <name>sn-glycerol 3-phosphate</name>
        <dbReference type="ChEBI" id="CHEBI:57597"/>
    </ligand>
</feature>
<feature type="binding site" evidence="1">
    <location>
        <position position="149"/>
    </location>
    <ligand>
        <name>sn-glycerol 3-phosphate</name>
        <dbReference type="ChEBI" id="CHEBI:57597"/>
    </ligand>
</feature>
<feature type="binding site" evidence="1">
    <location>
        <position position="151"/>
    </location>
    <ligand>
        <name>NADPH</name>
        <dbReference type="ChEBI" id="CHEBI:57783"/>
    </ligand>
</feature>
<feature type="binding site" evidence="1">
    <location>
        <position position="203"/>
    </location>
    <ligand>
        <name>sn-glycerol 3-phosphate</name>
        <dbReference type="ChEBI" id="CHEBI:57597"/>
    </ligand>
</feature>
<feature type="binding site" evidence="1">
    <location>
        <position position="256"/>
    </location>
    <ligand>
        <name>sn-glycerol 3-phosphate</name>
        <dbReference type="ChEBI" id="CHEBI:57597"/>
    </ligand>
</feature>
<feature type="binding site" evidence="1">
    <location>
        <position position="266"/>
    </location>
    <ligand>
        <name>sn-glycerol 3-phosphate</name>
        <dbReference type="ChEBI" id="CHEBI:57597"/>
    </ligand>
</feature>
<feature type="binding site" evidence="1">
    <location>
        <position position="267"/>
    </location>
    <ligand>
        <name>NADPH</name>
        <dbReference type="ChEBI" id="CHEBI:57783"/>
    </ligand>
</feature>
<feature type="binding site" evidence="1">
    <location>
        <position position="267"/>
    </location>
    <ligand>
        <name>sn-glycerol 3-phosphate</name>
        <dbReference type="ChEBI" id="CHEBI:57597"/>
    </ligand>
</feature>
<feature type="binding site" evidence="1">
    <location>
        <position position="268"/>
    </location>
    <ligand>
        <name>sn-glycerol 3-phosphate</name>
        <dbReference type="ChEBI" id="CHEBI:57597"/>
    </ligand>
</feature>
<feature type="binding site" evidence="1">
    <location>
        <position position="291"/>
    </location>
    <ligand>
        <name>NADPH</name>
        <dbReference type="ChEBI" id="CHEBI:57783"/>
    </ligand>
</feature>
<feature type="binding site" evidence="1">
    <location>
        <position position="293"/>
    </location>
    <ligand>
        <name>NADPH</name>
        <dbReference type="ChEBI" id="CHEBI:57783"/>
    </ligand>
</feature>
<evidence type="ECO:0000255" key="1">
    <source>
        <dbReference type="HAMAP-Rule" id="MF_00394"/>
    </source>
</evidence>
<keyword id="KW-0963">Cytoplasm</keyword>
<keyword id="KW-0444">Lipid biosynthesis</keyword>
<keyword id="KW-0443">Lipid metabolism</keyword>
<keyword id="KW-0520">NAD</keyword>
<keyword id="KW-0521">NADP</keyword>
<keyword id="KW-0547">Nucleotide-binding</keyword>
<keyword id="KW-0560">Oxidoreductase</keyword>
<keyword id="KW-0594">Phospholipid biosynthesis</keyword>
<keyword id="KW-1208">Phospholipid metabolism</keyword>